<evidence type="ECO:0000250" key="1"/>
<evidence type="ECO:0000256" key="2">
    <source>
        <dbReference type="SAM" id="MobiDB-lite"/>
    </source>
</evidence>
<evidence type="ECO:0000269" key="3">
    <source>
    </source>
</evidence>
<evidence type="ECO:0000305" key="4"/>
<organism>
    <name type="scientific">Hirudinaria manillensis</name>
    <name type="common">Asian medical leech</name>
    <name type="synonym">Poecilobdella manillensis</name>
    <dbReference type="NCBI Taxonomy" id="1348078"/>
    <lineage>
        <taxon>Eukaryota</taxon>
        <taxon>Metazoa</taxon>
        <taxon>Spiralia</taxon>
        <taxon>Lophotrochozoa</taxon>
        <taxon>Annelida</taxon>
        <taxon>Clitellata</taxon>
        <taxon>Hirudinea</taxon>
        <taxon>Hirudinida</taxon>
        <taxon>Hirudiniformes</taxon>
        <taxon>Hirudinidae</taxon>
        <taxon>Hirudinaria</taxon>
    </lineage>
</organism>
<protein>
    <recommendedName>
        <fullName>Hirudin-P6</fullName>
    </recommendedName>
</protein>
<keyword id="KW-0903">Direct protein sequencing</keyword>
<keyword id="KW-1015">Disulfide bond</keyword>
<keyword id="KW-0325">Glycoprotein</keyword>
<keyword id="KW-0646">Protease inhibitor</keyword>
<keyword id="KW-0964">Secreted</keyword>
<keyword id="KW-0722">Serine protease inhibitor</keyword>
<keyword id="KW-0765">Sulfation</keyword>
<comment type="function">
    <text>Hirudin is a potent thrombin-specific protease inhibitor. It forms a stable non-covalent complex with alpha-thrombin, thereby abolishing its ability to cleave fibrinogen.</text>
</comment>
<comment type="subcellular location">
    <subcellularLocation>
        <location>Secreted</location>
    </subcellularLocation>
</comment>
<comment type="PTM">
    <text>O-linked glycan consists of Fuc-Gal-GalNAc trisaccharide.</text>
</comment>
<comment type="similarity">
    <text evidence="4">Belongs to the protease inhibitor I14 (hirudin) family.</text>
</comment>
<dbReference type="PIR" id="A42207">
    <property type="entry name" value="A42207"/>
</dbReference>
<dbReference type="SMR" id="P28512"/>
<dbReference type="MEROPS" id="I14.001"/>
<dbReference type="GlyConnect" id="221">
    <property type="glycosylation" value="3 O-Linked glycans (1 site)"/>
</dbReference>
<dbReference type="GO" id="GO:0005576">
    <property type="term" value="C:extracellular region"/>
    <property type="evidence" value="ECO:0007669"/>
    <property type="project" value="UniProtKB-SubCell"/>
</dbReference>
<dbReference type="GO" id="GO:0004867">
    <property type="term" value="F:serine-type endopeptidase inhibitor activity"/>
    <property type="evidence" value="ECO:0007669"/>
    <property type="project" value="UniProtKB-KW"/>
</dbReference>
<dbReference type="Gene3D" id="2.70.10.10">
    <property type="entry name" value="Thrombin Inhibitor (Hirudin), subunit I"/>
    <property type="match status" value="1"/>
</dbReference>
<dbReference type="InterPro" id="IPR024793">
    <property type="entry name" value="Hirudin"/>
</dbReference>
<dbReference type="InterPro" id="IPR011061">
    <property type="entry name" value="Hirudin/antistatin"/>
</dbReference>
<dbReference type="InterPro" id="IPR000429">
    <property type="entry name" value="Prot_inh_hirudin"/>
</dbReference>
<dbReference type="Pfam" id="PF00713">
    <property type="entry name" value="Hirudin"/>
    <property type="match status" value="1"/>
</dbReference>
<dbReference type="PIRSF" id="PIRSF001640">
    <property type="entry name" value="Hirudin"/>
    <property type="match status" value="1"/>
</dbReference>
<dbReference type="PRINTS" id="PR00777">
    <property type="entry name" value="HIRUDIN"/>
</dbReference>
<dbReference type="SUPFAM" id="SSF57262">
    <property type="entry name" value="Leech antihemostatic proteins"/>
    <property type="match status" value="1"/>
</dbReference>
<accession>P28512</accession>
<name>HIRP6_HIRMN</name>
<reference key="1">
    <citation type="journal article" date="1992" name="Biochemistry">
        <title>Primary structure and function of novel O-glycosylated hirudins from the leech Hirudinaria manillensis.</title>
        <authorList>
            <person name="Steiner V."/>
            <person name="Knecht R."/>
            <person name="Boernsen O."/>
            <person name="Gassmann E."/>
            <person name="Stone S.R."/>
            <person name="Raschdorf F."/>
            <person name="Schlaeppi J.-M."/>
            <person name="Maschler R."/>
        </authorList>
    </citation>
    <scope>PROTEIN SEQUENCE</scope>
    <scope>STRUCTURE OF CARBOHYDRATE</scope>
    <scope>SULFATION AT TYR-61</scope>
    <scope>IDENTIFICATION BY MASS SPECTROMETRY</scope>
</reference>
<sequence length="63" mass="6977">MRYTACTESGQNQCICEGNDVCGQGRNCQFDSSGKKCVEGEGTRKPQNEGQHDFDPIPEEYLS</sequence>
<proteinExistence type="evidence at protein level"/>
<feature type="chain" id="PRO_0000195652" description="Hirudin-P6">
    <location>
        <begin position="1"/>
        <end position="63"/>
    </location>
</feature>
<feature type="region of interest" description="Interaction with thrombin active site" evidence="1">
    <location>
        <begin position="1"/>
        <end position="3"/>
    </location>
</feature>
<feature type="region of interest" description="Disordered" evidence="2">
    <location>
        <begin position="35"/>
        <end position="63"/>
    </location>
</feature>
<feature type="region of interest" description="Interaction with fibrinogen-binding exosite of thrombin" evidence="1">
    <location>
        <begin position="53"/>
        <end position="63"/>
    </location>
</feature>
<feature type="compositionally biased region" description="Basic and acidic residues" evidence="2">
    <location>
        <begin position="35"/>
        <end position="55"/>
    </location>
</feature>
<feature type="modified residue" description="Sulfotyrosine" evidence="3">
    <location>
        <position position="61"/>
    </location>
</feature>
<feature type="glycosylation site" id="CAR_000143" description="O-linked (GalNAc...) threonine">
    <location>
        <position position="43"/>
    </location>
</feature>
<feature type="disulfide bond" evidence="1">
    <location>
        <begin position="6"/>
        <end position="14"/>
    </location>
</feature>
<feature type="disulfide bond" evidence="1">
    <location>
        <begin position="16"/>
        <end position="28"/>
    </location>
</feature>
<feature type="disulfide bond" evidence="1">
    <location>
        <begin position="22"/>
        <end position="37"/>
    </location>
</feature>